<proteinExistence type="evidence at protein level"/>
<reference key="1">
    <citation type="journal article" date="2001" name="J. Neurosci.">
        <title>A novel member of the Ig superfamily, turtle, is a CNS-specific protein required for coordinated motor control.</title>
        <authorList>
            <person name="Bodily K.D."/>
            <person name="Morrison C.M."/>
            <person name="Renden R.B."/>
            <person name="Broadie K."/>
        </authorList>
    </citation>
    <scope>NUCLEOTIDE SEQUENCE [MRNA] (ISOFORMS 1; 3 AND 4)</scope>
    <scope>FUNCTION</scope>
    <scope>DEVELOPMENTAL STAGE</scope>
    <scope>TISSUE SPECIFICITY</scope>
    <scope>DISRUPTION PHENOTYPE</scope>
</reference>
<reference key="2">
    <citation type="journal article" date="2000" name="Science">
        <title>The genome sequence of Drosophila melanogaster.</title>
        <authorList>
            <person name="Adams M.D."/>
            <person name="Celniker S.E."/>
            <person name="Holt R.A."/>
            <person name="Evans C.A."/>
            <person name="Gocayne J.D."/>
            <person name="Amanatides P.G."/>
            <person name="Scherer S.E."/>
            <person name="Li P.W."/>
            <person name="Hoskins R.A."/>
            <person name="Galle R.F."/>
            <person name="George R.A."/>
            <person name="Lewis S.E."/>
            <person name="Richards S."/>
            <person name="Ashburner M."/>
            <person name="Henderson S.N."/>
            <person name="Sutton G.G."/>
            <person name="Wortman J.R."/>
            <person name="Yandell M.D."/>
            <person name="Zhang Q."/>
            <person name="Chen L.X."/>
            <person name="Brandon R.C."/>
            <person name="Rogers Y.-H.C."/>
            <person name="Blazej R.G."/>
            <person name="Champe M."/>
            <person name="Pfeiffer B.D."/>
            <person name="Wan K.H."/>
            <person name="Doyle C."/>
            <person name="Baxter E.G."/>
            <person name="Helt G."/>
            <person name="Nelson C.R."/>
            <person name="Miklos G.L.G."/>
            <person name="Abril J.F."/>
            <person name="Agbayani A."/>
            <person name="An H.-J."/>
            <person name="Andrews-Pfannkoch C."/>
            <person name="Baldwin D."/>
            <person name="Ballew R.M."/>
            <person name="Basu A."/>
            <person name="Baxendale J."/>
            <person name="Bayraktaroglu L."/>
            <person name="Beasley E.M."/>
            <person name="Beeson K.Y."/>
            <person name="Benos P.V."/>
            <person name="Berman B.P."/>
            <person name="Bhandari D."/>
            <person name="Bolshakov S."/>
            <person name="Borkova D."/>
            <person name="Botchan M.R."/>
            <person name="Bouck J."/>
            <person name="Brokstein P."/>
            <person name="Brottier P."/>
            <person name="Burtis K.C."/>
            <person name="Busam D.A."/>
            <person name="Butler H."/>
            <person name="Cadieu E."/>
            <person name="Center A."/>
            <person name="Chandra I."/>
            <person name="Cherry J.M."/>
            <person name="Cawley S."/>
            <person name="Dahlke C."/>
            <person name="Davenport L.B."/>
            <person name="Davies P."/>
            <person name="de Pablos B."/>
            <person name="Delcher A."/>
            <person name="Deng Z."/>
            <person name="Mays A.D."/>
            <person name="Dew I."/>
            <person name="Dietz S.M."/>
            <person name="Dodson K."/>
            <person name="Doup L.E."/>
            <person name="Downes M."/>
            <person name="Dugan-Rocha S."/>
            <person name="Dunkov B.C."/>
            <person name="Dunn P."/>
            <person name="Durbin K.J."/>
            <person name="Evangelista C.C."/>
            <person name="Ferraz C."/>
            <person name="Ferriera S."/>
            <person name="Fleischmann W."/>
            <person name="Fosler C."/>
            <person name="Gabrielian A.E."/>
            <person name="Garg N.S."/>
            <person name="Gelbart W.M."/>
            <person name="Glasser K."/>
            <person name="Glodek A."/>
            <person name="Gong F."/>
            <person name="Gorrell J.H."/>
            <person name="Gu Z."/>
            <person name="Guan P."/>
            <person name="Harris M."/>
            <person name="Harris N.L."/>
            <person name="Harvey D.A."/>
            <person name="Heiman T.J."/>
            <person name="Hernandez J.R."/>
            <person name="Houck J."/>
            <person name="Hostin D."/>
            <person name="Houston K.A."/>
            <person name="Howland T.J."/>
            <person name="Wei M.-H."/>
            <person name="Ibegwam C."/>
            <person name="Jalali M."/>
            <person name="Kalush F."/>
            <person name="Karpen G.H."/>
            <person name="Ke Z."/>
            <person name="Kennison J.A."/>
            <person name="Ketchum K.A."/>
            <person name="Kimmel B.E."/>
            <person name="Kodira C.D."/>
            <person name="Kraft C.L."/>
            <person name="Kravitz S."/>
            <person name="Kulp D."/>
            <person name="Lai Z."/>
            <person name="Lasko P."/>
            <person name="Lei Y."/>
            <person name="Levitsky A.A."/>
            <person name="Li J.H."/>
            <person name="Li Z."/>
            <person name="Liang Y."/>
            <person name="Lin X."/>
            <person name="Liu X."/>
            <person name="Mattei B."/>
            <person name="McIntosh T.C."/>
            <person name="McLeod M.P."/>
            <person name="McPherson D."/>
            <person name="Merkulov G."/>
            <person name="Milshina N.V."/>
            <person name="Mobarry C."/>
            <person name="Morris J."/>
            <person name="Moshrefi A."/>
            <person name="Mount S.M."/>
            <person name="Moy M."/>
            <person name="Murphy B."/>
            <person name="Murphy L."/>
            <person name="Muzny D.M."/>
            <person name="Nelson D.L."/>
            <person name="Nelson D.R."/>
            <person name="Nelson K.A."/>
            <person name="Nixon K."/>
            <person name="Nusskern D.R."/>
            <person name="Pacleb J.M."/>
            <person name="Palazzolo M."/>
            <person name="Pittman G.S."/>
            <person name="Pan S."/>
            <person name="Pollard J."/>
            <person name="Puri V."/>
            <person name="Reese M.G."/>
            <person name="Reinert K."/>
            <person name="Remington K."/>
            <person name="Saunders R.D.C."/>
            <person name="Scheeler F."/>
            <person name="Shen H."/>
            <person name="Shue B.C."/>
            <person name="Siden-Kiamos I."/>
            <person name="Simpson M."/>
            <person name="Skupski M.P."/>
            <person name="Smith T.J."/>
            <person name="Spier E."/>
            <person name="Spradling A.C."/>
            <person name="Stapleton M."/>
            <person name="Strong R."/>
            <person name="Sun E."/>
            <person name="Svirskas R."/>
            <person name="Tector C."/>
            <person name="Turner R."/>
            <person name="Venter E."/>
            <person name="Wang A.H."/>
            <person name="Wang X."/>
            <person name="Wang Z.-Y."/>
            <person name="Wassarman D.A."/>
            <person name="Weinstock G.M."/>
            <person name="Weissenbach J."/>
            <person name="Williams S.M."/>
            <person name="Woodage T."/>
            <person name="Worley K.C."/>
            <person name="Wu D."/>
            <person name="Yang S."/>
            <person name="Yao Q.A."/>
            <person name="Ye J."/>
            <person name="Yeh R.-F."/>
            <person name="Zaveri J.S."/>
            <person name="Zhan M."/>
            <person name="Zhang G."/>
            <person name="Zhao Q."/>
            <person name="Zheng L."/>
            <person name="Zheng X.H."/>
            <person name="Zhong F.N."/>
            <person name="Zhong W."/>
            <person name="Zhou X."/>
            <person name="Zhu S.C."/>
            <person name="Zhu X."/>
            <person name="Smith H.O."/>
            <person name="Gibbs R.A."/>
            <person name="Myers E.W."/>
            <person name="Rubin G.M."/>
            <person name="Venter J.C."/>
        </authorList>
    </citation>
    <scope>NUCLEOTIDE SEQUENCE [LARGE SCALE GENOMIC DNA]</scope>
    <source>
        <strain>Berkeley</strain>
    </source>
</reference>
<reference key="3">
    <citation type="journal article" date="2002" name="Genome Biol.">
        <title>Annotation of the Drosophila melanogaster euchromatic genome: a systematic review.</title>
        <authorList>
            <person name="Misra S."/>
            <person name="Crosby M.A."/>
            <person name="Mungall C.J."/>
            <person name="Matthews B.B."/>
            <person name="Campbell K.S."/>
            <person name="Hradecky P."/>
            <person name="Huang Y."/>
            <person name="Kaminker J.S."/>
            <person name="Millburn G.H."/>
            <person name="Prochnik S.E."/>
            <person name="Smith C.D."/>
            <person name="Tupy J.L."/>
            <person name="Whitfield E.J."/>
            <person name="Bayraktaroglu L."/>
            <person name="Berman B.P."/>
            <person name="Bettencourt B.R."/>
            <person name="Celniker S.E."/>
            <person name="de Grey A.D.N.J."/>
            <person name="Drysdale R.A."/>
            <person name="Harris N.L."/>
            <person name="Richter J."/>
            <person name="Russo S."/>
            <person name="Schroeder A.J."/>
            <person name="Shu S.Q."/>
            <person name="Stapleton M."/>
            <person name="Yamada C."/>
            <person name="Ashburner M."/>
            <person name="Gelbart W.M."/>
            <person name="Rubin G.M."/>
            <person name="Lewis S.E."/>
        </authorList>
    </citation>
    <scope>GENOME REANNOTATION</scope>
    <scope>ALTERNATIVE SPLICING</scope>
    <source>
        <strain>Berkeley</strain>
    </source>
</reference>
<reference key="4">
    <citation type="submission" date="2003-08" db="EMBL/GenBank/DDBJ databases">
        <authorList>
            <person name="Stapleton M."/>
            <person name="Brokstein P."/>
            <person name="Hong L."/>
            <person name="Agbayani A."/>
            <person name="Carlson J.W."/>
            <person name="Champe M."/>
            <person name="Chavez C."/>
            <person name="Dorsett V."/>
            <person name="Dresnek D."/>
            <person name="Farfan D."/>
            <person name="Frise E."/>
            <person name="George R.A."/>
            <person name="Gonzalez M."/>
            <person name="Guarin H."/>
            <person name="Kronmiller B."/>
            <person name="Li P.W."/>
            <person name="Liao G."/>
            <person name="Miranda A."/>
            <person name="Mungall C.J."/>
            <person name="Nunoo J."/>
            <person name="Pacleb J.M."/>
            <person name="Paragas V."/>
            <person name="Park S."/>
            <person name="Patel S."/>
            <person name="Phouanenavong S."/>
            <person name="Wan K.H."/>
            <person name="Yu C."/>
            <person name="Lewis S.E."/>
            <person name="Rubin G.M."/>
            <person name="Celniker S.E."/>
        </authorList>
    </citation>
    <scope>NUCLEOTIDE SEQUENCE [LARGE SCALE MRNA] (ISOFORM 2)</scope>
    <source>
        <strain>Berkeley</strain>
    </source>
</reference>
<reference key="5">
    <citation type="journal article" date="2013" name="J. Neurosci.">
        <title>Visual circuit assembly requires fine tuning of the novel Ig transmembrane protein Borderless.</title>
        <authorList>
            <person name="Cameron S."/>
            <person name="Chang W.T."/>
            <person name="Chen Y."/>
            <person name="Zhou Y."/>
            <person name="Taran S."/>
            <person name="Rao Y."/>
        </authorList>
    </citation>
    <scope>FUNCTION</scope>
    <scope>INTERACTION WITH BDL</scope>
    <scope>DISRUPTION PHENOTYPE</scope>
</reference>
<sequence>MGVCADLGSHRWCRALSTQHNTEKSKEQQQQSQPLEIPEQRASKCRGDIDRTTTTTIPASKTLTASPAKTAAFTVKTTRRRRSRRRAEGSSICVPIRRGQGSTPTPTIQVLQFVLVSLLALLAKNAQAHNIPEDAVHITAILGEGVIFNCHVEFPNDHPVPYVLQWDKKVSETGSDLPIYIWYESYPEHIEEGYKGRVSRVSQDSPFGSASLNLTNIRESDQGWYECKVVFLNRDPKQHKNGTWFHLDVHAPPRFSVTPEDIIYVNLGDSIILNCQADGTPTPEILWYKDANPVDPSPTVGIFNDGTELRISTIRHEDIGEYTCIARNGEGQVSHTARVIIAGGAVIMVPPTNQTKLEGEKVIFSCEAKAMPGNVTVRWYREGSPVREVAALETRVTIRKDGSLIINPIKPDDSGQYLCEVTNGIGDPQSASAYLSVEYPAKVTFTPTVQYLPFRLAGVVQCYIKSSPQLQYVTWTKDKRLLEPYQMKDIVVMANGSLLFTRVNEEHQGQYACTPYNAQGTAGASGVMDVLVRKPPAFTVEPETLYQRKVGDSVEMHCDALEAEGTERPTIKWQRQEGEQLTESQRNRIKISGGNITIENLRREDFGYYQCVVSNEVATLMAVTQLVIEGTQPHAPYNITGKATESSITLQWLPGYSGGSEYKQDYTIWFREAGVNDWQTISVTPSGSTQVTINGLASGTTYEFQVVGRNVLGDGMMSKVMTVRTLEDAPAAPRNVKAATQPPDSFFQLMPDEAGPKPGPPRNVSVTEVSNGFLITWQSPLERAHIVKFYTIKYRTDAQWKTLNRGQIRPEETQYLVKNLVGGRTYYFRVLANSEKSYESSDEVKFPVPARVKHKAITAGVVGGILFFIVAIILSVCAVKICNKRKRRKQEKEFNMVACRITDARNIAANNHHLHNRSTGSISSGQVPLKNNTEHYRDYESVFIVPGHPVIIKIVQTNPNIKSNRHSHCHLHWIWPPDRCTNCHSIYSSPNLEDGDEDDGGGGRRRSVSRIQRSLDGRFVLDVEGVSKLGYSQQTLESGNVDVVDGGLFERRNSNVSQKSSSDDGGFLSRRNFITARASWRRPLVASSSQLSLQSAADSARGFLQGLLKIGAKQSAVPPNSQSYFDEAVSGARYQNVLRPYTSSNNLYGNADRSRPLHINTISGSLSQQQQLYTPSRISRIFSSSPQQLQPHHQQLLLSSGGSGAYPTHFSDLSTVYPPNSAERSSHNLSSRYRYYSQELPSLRTIQEETRRQQQQKQHPLEDHFVPLQLPSPPSWRSYYQSQASYRPRTRWYPRHHSRLFSNRQQQHEMLSPLPQLNLNLRNSMNPGGLEASPESRSSSSGFGSKNTSNHPGSTSEWRLLPPYRAPPSPPKHSGYFGGQQAQGQTPHGSYSYPRATTPPYTMAHWLEMISRLNAATDSNLPKAPCPVDVGSVDGHYEFDPATPTPSASSMLREDLNLHIDTHPYHHHTLGPLSGSLLHSHAPYGGGARKQRSLPAHLPRYDNVEVRLQAMREEFYAYRKRQAMQQMESVC</sequence>
<keyword id="KW-0025">Alternative splicing</keyword>
<keyword id="KW-1015">Disulfide bond</keyword>
<keyword id="KW-0393">Immunoglobulin domain</keyword>
<keyword id="KW-0472">Membrane</keyword>
<keyword id="KW-0524">Neurogenesis</keyword>
<keyword id="KW-1185">Reference proteome</keyword>
<keyword id="KW-0677">Repeat</keyword>
<keyword id="KW-0812">Transmembrane</keyword>
<keyword id="KW-1133">Transmembrane helix</keyword>
<evidence type="ECO:0000255" key="1"/>
<evidence type="ECO:0000255" key="2">
    <source>
        <dbReference type="PROSITE-ProRule" id="PRU00114"/>
    </source>
</evidence>
<evidence type="ECO:0000255" key="3">
    <source>
        <dbReference type="PROSITE-ProRule" id="PRU00316"/>
    </source>
</evidence>
<evidence type="ECO:0000256" key="4">
    <source>
        <dbReference type="SAM" id="MobiDB-lite"/>
    </source>
</evidence>
<evidence type="ECO:0000269" key="5">
    <source>
    </source>
</evidence>
<evidence type="ECO:0000269" key="6">
    <source>
    </source>
</evidence>
<evidence type="ECO:0000303" key="7">
    <source>
    </source>
</evidence>
<evidence type="ECO:0000303" key="8">
    <source ref="4"/>
</evidence>
<evidence type="ECO:0000305" key="9"/>
<organism>
    <name type="scientific">Drosophila melanogaster</name>
    <name type="common">Fruit fly</name>
    <dbReference type="NCBI Taxonomy" id="7227"/>
    <lineage>
        <taxon>Eukaryota</taxon>
        <taxon>Metazoa</taxon>
        <taxon>Ecdysozoa</taxon>
        <taxon>Arthropoda</taxon>
        <taxon>Hexapoda</taxon>
        <taxon>Insecta</taxon>
        <taxon>Pterygota</taxon>
        <taxon>Neoptera</taxon>
        <taxon>Endopterygota</taxon>
        <taxon>Diptera</taxon>
        <taxon>Brachycera</taxon>
        <taxon>Muscomorpha</taxon>
        <taxon>Ephydroidea</taxon>
        <taxon>Drosophilidae</taxon>
        <taxon>Drosophila</taxon>
        <taxon>Sophophora</taxon>
    </lineage>
</organism>
<dbReference type="EMBL" id="AJ312132">
    <property type="protein sequence ID" value="CAC39161.1"/>
    <property type="molecule type" value="mRNA"/>
</dbReference>
<dbReference type="EMBL" id="AJ312133">
    <property type="protein sequence ID" value="CAC39162.1"/>
    <property type="status" value="ALT_SEQ"/>
    <property type="molecule type" value="mRNA"/>
</dbReference>
<dbReference type="EMBL" id="AJ312134">
    <property type="protein sequence ID" value="CAC39163.1"/>
    <property type="molecule type" value="mRNA"/>
</dbReference>
<dbReference type="EMBL" id="AJ312135">
    <property type="protein sequence ID" value="CAC39164.1"/>
    <property type="molecule type" value="mRNA"/>
</dbReference>
<dbReference type="EMBL" id="AE014134">
    <property type="protein sequence ID" value="AAF51029.3"/>
    <property type="molecule type" value="Genomic_DNA"/>
</dbReference>
<dbReference type="EMBL" id="AE014134">
    <property type="protein sequence ID" value="AAF51030.3"/>
    <property type="molecule type" value="Genomic_DNA"/>
</dbReference>
<dbReference type="EMBL" id="AE014134">
    <property type="protein sequence ID" value="AAF51031.3"/>
    <property type="molecule type" value="Genomic_DNA"/>
</dbReference>
<dbReference type="EMBL" id="AE014134">
    <property type="protein sequence ID" value="AAN11173.1"/>
    <property type="molecule type" value="Genomic_DNA"/>
</dbReference>
<dbReference type="EMBL" id="BT010247">
    <property type="protein sequence ID" value="AAQ23565.1"/>
    <property type="molecule type" value="mRNA"/>
</dbReference>
<dbReference type="RefSeq" id="NP_001162869.1">
    <molecule id="Q967D7-2"/>
    <property type="nucleotide sequence ID" value="NM_001169398.1"/>
</dbReference>
<dbReference type="RefSeq" id="NP_524866.4">
    <molecule id="Q967D7-5"/>
    <property type="nucleotide sequence ID" value="NM_080127.6"/>
</dbReference>
<dbReference type="RefSeq" id="NP_722967.2">
    <molecule id="Q967D7-2"/>
    <property type="nucleotide sequence ID" value="NM_164576.4"/>
</dbReference>
<dbReference type="RefSeq" id="NP_722968.1">
    <molecule id="Q967D7-4"/>
    <property type="nucleotide sequence ID" value="NM_164577.3"/>
</dbReference>
<dbReference type="RefSeq" id="NP_722969.1">
    <molecule id="Q967D7-3"/>
    <property type="nucleotide sequence ID" value="NM_164578.4"/>
</dbReference>
<dbReference type="SMR" id="Q967D7"/>
<dbReference type="BioGRID" id="70063">
    <property type="interactions" value="8"/>
</dbReference>
<dbReference type="FunCoup" id="Q967D7">
    <property type="interactions" value="110"/>
</dbReference>
<dbReference type="IntAct" id="Q967D7">
    <property type="interactions" value="2"/>
</dbReference>
<dbReference type="STRING" id="7227.FBpp0312489"/>
<dbReference type="GlyGen" id="Q967D7">
    <property type="glycosylation" value="4 sites"/>
</dbReference>
<dbReference type="PaxDb" id="7227-FBpp0305668"/>
<dbReference type="EnsemblMetazoa" id="FBtr0089268">
    <molecule id="Q967D7-3"/>
    <property type="protein sequence ID" value="FBpp0088325"/>
    <property type="gene ID" value="FBgn0010473"/>
</dbReference>
<dbReference type="EnsemblMetazoa" id="FBtr0089269">
    <molecule id="Q967D7-4"/>
    <property type="protein sequence ID" value="FBpp0088326"/>
    <property type="gene ID" value="FBgn0010473"/>
</dbReference>
<dbReference type="EnsemblMetazoa" id="FBtr0089270">
    <molecule id="Q967D7-2"/>
    <property type="protein sequence ID" value="FBpp0088327"/>
    <property type="gene ID" value="FBgn0010473"/>
</dbReference>
<dbReference type="EnsemblMetazoa" id="FBtr0089271">
    <molecule id="Q967D7-5"/>
    <property type="protein sequence ID" value="FBpp0088328"/>
    <property type="gene ID" value="FBgn0010473"/>
</dbReference>
<dbReference type="EnsemblMetazoa" id="FBtr0301864">
    <molecule id="Q967D7-2"/>
    <property type="protein sequence ID" value="FBpp0291078"/>
    <property type="gene ID" value="FBgn0010473"/>
</dbReference>
<dbReference type="GeneID" id="46015"/>
<dbReference type="KEGG" id="dme:Dmel_CG15427"/>
<dbReference type="UCSC" id="CG15427-RA">
    <molecule id="Q967D7-1"/>
    <property type="organism name" value="d. melanogaster"/>
</dbReference>
<dbReference type="AGR" id="FB:FBgn0010473"/>
<dbReference type="CTD" id="46015"/>
<dbReference type="FlyBase" id="FBgn0010473">
    <property type="gene designation" value="tutl"/>
</dbReference>
<dbReference type="VEuPathDB" id="VectorBase:FBgn0010473"/>
<dbReference type="eggNOG" id="KOG3510">
    <property type="taxonomic scope" value="Eukaryota"/>
</dbReference>
<dbReference type="GeneTree" id="ENSGT00940000170870"/>
<dbReference type="InParanoid" id="Q967D7"/>
<dbReference type="OrthoDB" id="6234674at2759"/>
<dbReference type="PhylomeDB" id="Q967D7"/>
<dbReference type="BioGRID-ORCS" id="46015">
    <property type="hits" value="0 hits in 3 CRISPR screens"/>
</dbReference>
<dbReference type="ChiTaRS" id="tutl">
    <property type="organism name" value="fly"/>
</dbReference>
<dbReference type="GenomeRNAi" id="46015"/>
<dbReference type="PRO" id="PR:Q967D7"/>
<dbReference type="Proteomes" id="UP000000803">
    <property type="component" value="Chromosome 2L"/>
</dbReference>
<dbReference type="Bgee" id="FBgn0010473">
    <property type="expression patterns" value="Expressed in antennal lobe projection neuron (Drosophila) in insect head and 236 other cell types or tissues"/>
</dbReference>
<dbReference type="ExpressionAtlas" id="Q967D7">
    <property type="expression patterns" value="baseline and differential"/>
</dbReference>
<dbReference type="GO" id="GO:0030424">
    <property type="term" value="C:axon"/>
    <property type="evidence" value="ECO:0000318"/>
    <property type="project" value="GO_Central"/>
</dbReference>
<dbReference type="GO" id="GO:0005886">
    <property type="term" value="C:plasma membrane"/>
    <property type="evidence" value="ECO:0000318"/>
    <property type="project" value="GO_Central"/>
</dbReference>
<dbReference type="GO" id="GO:0098632">
    <property type="term" value="F:cell-cell adhesion mediator activity"/>
    <property type="evidence" value="ECO:0000353"/>
    <property type="project" value="FlyBase"/>
</dbReference>
<dbReference type="GO" id="GO:0008344">
    <property type="term" value="P:adult locomotory behavior"/>
    <property type="evidence" value="ECO:0000315"/>
    <property type="project" value="FlyBase"/>
</dbReference>
<dbReference type="GO" id="GO:0007411">
    <property type="term" value="P:axon guidance"/>
    <property type="evidence" value="ECO:0000315"/>
    <property type="project" value="FlyBase"/>
</dbReference>
<dbReference type="GO" id="GO:0016199">
    <property type="term" value="P:axon midline choice point recognition"/>
    <property type="evidence" value="ECO:0000315"/>
    <property type="project" value="FlyBase"/>
</dbReference>
<dbReference type="GO" id="GO:0007414">
    <property type="term" value="P:axonal defasciculation"/>
    <property type="evidence" value="ECO:0000315"/>
    <property type="project" value="FlyBase"/>
</dbReference>
<dbReference type="GO" id="GO:0070593">
    <property type="term" value="P:dendrite self-avoidance"/>
    <property type="evidence" value="ECO:0000315"/>
    <property type="project" value="FlyBase"/>
</dbReference>
<dbReference type="GO" id="GO:0007629">
    <property type="term" value="P:flight behavior"/>
    <property type="evidence" value="ECO:0000315"/>
    <property type="project" value="FlyBase"/>
</dbReference>
<dbReference type="GO" id="GO:0007156">
    <property type="term" value="P:homophilic cell adhesion via plasma membrane adhesion molecules"/>
    <property type="evidence" value="ECO:0000318"/>
    <property type="project" value="GO_Central"/>
</dbReference>
<dbReference type="GO" id="GO:0030537">
    <property type="term" value="P:larval behavior"/>
    <property type="evidence" value="ECO:0000315"/>
    <property type="project" value="FlyBase"/>
</dbReference>
<dbReference type="GO" id="GO:0007638">
    <property type="term" value="P:mechanosensory behavior"/>
    <property type="evidence" value="ECO:0000315"/>
    <property type="project" value="FlyBase"/>
</dbReference>
<dbReference type="GO" id="GO:0045467">
    <property type="term" value="P:R7 cell development"/>
    <property type="evidence" value="ECO:0000315"/>
    <property type="project" value="FlyBase"/>
</dbReference>
<dbReference type="GO" id="GO:0048814">
    <property type="term" value="P:regulation of dendrite morphogenesis"/>
    <property type="evidence" value="ECO:0000315"/>
    <property type="project" value="FlyBase"/>
</dbReference>
<dbReference type="GO" id="GO:0008039">
    <property type="term" value="P:synaptic target recognition"/>
    <property type="evidence" value="ECO:0000315"/>
    <property type="project" value="FlyBase"/>
</dbReference>
<dbReference type="CDD" id="cd00063">
    <property type="entry name" value="FN3"/>
    <property type="match status" value="2"/>
</dbReference>
<dbReference type="FunFam" id="2.60.40.10:FF:001226">
    <property type="entry name" value="protein turtle isoform X1"/>
    <property type="match status" value="1"/>
</dbReference>
<dbReference type="FunFam" id="2.60.40.10:FF:001080">
    <property type="entry name" value="protein turtle isoform X10"/>
    <property type="match status" value="1"/>
</dbReference>
<dbReference type="FunFam" id="2.60.40.10:FF:000733">
    <property type="entry name" value="Turtle, isoform F"/>
    <property type="match status" value="1"/>
</dbReference>
<dbReference type="FunFam" id="2.60.40.10:FF:000830">
    <property type="entry name" value="Turtle, isoform F"/>
    <property type="match status" value="1"/>
</dbReference>
<dbReference type="FunFam" id="2.60.40.10:FF:001453">
    <property type="entry name" value="Turtle, isoform G"/>
    <property type="match status" value="1"/>
</dbReference>
<dbReference type="FunFam" id="2.60.40.10:FF:001149">
    <property type="entry name" value="Turtle, isoform H"/>
    <property type="match status" value="1"/>
</dbReference>
<dbReference type="Gene3D" id="2.60.40.10">
    <property type="entry name" value="Immunoglobulins"/>
    <property type="match status" value="7"/>
</dbReference>
<dbReference type="InterPro" id="IPR003961">
    <property type="entry name" value="FN3_dom"/>
</dbReference>
<dbReference type="InterPro" id="IPR036116">
    <property type="entry name" value="FN3_sf"/>
</dbReference>
<dbReference type="InterPro" id="IPR007110">
    <property type="entry name" value="Ig-like_dom"/>
</dbReference>
<dbReference type="InterPro" id="IPR036179">
    <property type="entry name" value="Ig-like_dom_sf"/>
</dbReference>
<dbReference type="InterPro" id="IPR013783">
    <property type="entry name" value="Ig-like_fold"/>
</dbReference>
<dbReference type="InterPro" id="IPR013098">
    <property type="entry name" value="Ig_I-set"/>
</dbReference>
<dbReference type="InterPro" id="IPR003599">
    <property type="entry name" value="Ig_sub"/>
</dbReference>
<dbReference type="InterPro" id="IPR003598">
    <property type="entry name" value="Ig_sub2"/>
</dbReference>
<dbReference type="InterPro" id="IPR013106">
    <property type="entry name" value="Ig_V-set"/>
</dbReference>
<dbReference type="PANTHER" id="PTHR10075">
    <property type="entry name" value="BASIGIN RELATED"/>
    <property type="match status" value="1"/>
</dbReference>
<dbReference type="PANTHER" id="PTHR10075:SF92">
    <property type="entry name" value="PROTEIN TURTLE"/>
    <property type="match status" value="1"/>
</dbReference>
<dbReference type="Pfam" id="PF00041">
    <property type="entry name" value="fn3"/>
    <property type="match status" value="2"/>
</dbReference>
<dbReference type="Pfam" id="PF07679">
    <property type="entry name" value="I-set"/>
    <property type="match status" value="1"/>
</dbReference>
<dbReference type="Pfam" id="PF13927">
    <property type="entry name" value="Ig_3"/>
    <property type="match status" value="2"/>
</dbReference>
<dbReference type="Pfam" id="PF07686">
    <property type="entry name" value="V-set"/>
    <property type="match status" value="1"/>
</dbReference>
<dbReference type="SMART" id="SM00060">
    <property type="entry name" value="FN3"/>
    <property type="match status" value="2"/>
</dbReference>
<dbReference type="SMART" id="SM00409">
    <property type="entry name" value="IG"/>
    <property type="match status" value="5"/>
</dbReference>
<dbReference type="SMART" id="SM00408">
    <property type="entry name" value="IGc2"/>
    <property type="match status" value="5"/>
</dbReference>
<dbReference type="SMART" id="SM00406">
    <property type="entry name" value="IGv"/>
    <property type="match status" value="3"/>
</dbReference>
<dbReference type="SUPFAM" id="SSF49265">
    <property type="entry name" value="Fibronectin type III"/>
    <property type="match status" value="1"/>
</dbReference>
<dbReference type="SUPFAM" id="SSF48726">
    <property type="entry name" value="Immunoglobulin"/>
    <property type="match status" value="5"/>
</dbReference>
<dbReference type="PROSITE" id="PS50853">
    <property type="entry name" value="FN3"/>
    <property type="match status" value="2"/>
</dbReference>
<dbReference type="PROSITE" id="PS50835">
    <property type="entry name" value="IG_LIKE"/>
    <property type="match status" value="5"/>
</dbReference>
<name>TUTL_DROME</name>
<feature type="chain" id="PRO_0000306106" description="Protein turtle">
    <location>
        <begin position="1"/>
        <end position="1531"/>
    </location>
</feature>
<feature type="topological domain" description="Extracellular" evidence="1">
    <location>
        <begin position="1"/>
        <end position="858"/>
    </location>
</feature>
<feature type="transmembrane region" description="Helical" evidence="1">
    <location>
        <begin position="859"/>
        <end position="879"/>
    </location>
</feature>
<feature type="topological domain" description="Cytoplasmic" evidence="1">
    <location>
        <begin position="880"/>
        <end position="1531"/>
    </location>
</feature>
<feature type="domain" description="Ig-like C2-type 1">
    <location>
        <begin position="132"/>
        <end position="243"/>
    </location>
</feature>
<feature type="domain" description="Ig-like C2-type 2">
    <location>
        <begin position="253"/>
        <end position="340"/>
    </location>
</feature>
<feature type="domain" description="Ig-like C2-type 3">
    <location>
        <begin position="344"/>
        <end position="436"/>
    </location>
</feature>
<feature type="domain" description="Ig-like C2-type 4">
    <location>
        <begin position="440"/>
        <end position="529"/>
    </location>
</feature>
<feature type="domain" description="Ig-like C2-type 5">
    <location>
        <begin position="536"/>
        <end position="624"/>
    </location>
</feature>
<feature type="domain" description="Fibronectin type-III 1" evidence="3">
    <location>
        <begin position="632"/>
        <end position="728"/>
    </location>
</feature>
<feature type="domain" description="Fibronectin type-III 2" evidence="3">
    <location>
        <begin position="760"/>
        <end position="851"/>
    </location>
</feature>
<feature type="region of interest" description="Disordered" evidence="4">
    <location>
        <begin position="19"/>
        <end position="44"/>
    </location>
</feature>
<feature type="region of interest" description="Disordered" evidence="4">
    <location>
        <begin position="1248"/>
        <end position="1269"/>
    </location>
</feature>
<feature type="region of interest" description="Disordered" evidence="4">
    <location>
        <begin position="1318"/>
        <end position="1395"/>
    </location>
</feature>
<feature type="compositionally biased region" description="Low complexity" evidence="4">
    <location>
        <begin position="1333"/>
        <end position="1349"/>
    </location>
</feature>
<feature type="compositionally biased region" description="Polar residues" evidence="4">
    <location>
        <begin position="1380"/>
        <end position="1389"/>
    </location>
</feature>
<feature type="disulfide bond" evidence="2">
    <location>
        <begin position="150"/>
        <end position="227"/>
    </location>
</feature>
<feature type="disulfide bond" evidence="2">
    <location>
        <begin position="275"/>
        <end position="324"/>
    </location>
</feature>
<feature type="disulfide bond" evidence="2">
    <location>
        <begin position="366"/>
        <end position="419"/>
    </location>
</feature>
<feature type="disulfide bond" evidence="2">
    <location>
        <begin position="462"/>
        <end position="513"/>
    </location>
</feature>
<feature type="disulfide bond" evidence="2">
    <location>
        <begin position="558"/>
        <end position="611"/>
    </location>
</feature>
<feature type="splice variant" id="VSP_028401" description="In isoform 3." evidence="7">
    <original>VPPTNQTKLEGEKVIFSCEAKAMPGNVTV</original>
    <variation>DKAAPDKHTRTKSKSNVVNERLTIRVSPN</variation>
    <location>
        <begin position="349"/>
        <end position="377"/>
    </location>
</feature>
<feature type="splice variant" id="VSP_028402" description="In isoform 3." evidence="7">
    <location>
        <begin position="378"/>
        <end position="1531"/>
    </location>
</feature>
<feature type="splice variant" id="VSP_028403" description="In isoform 4." evidence="7">
    <original>EFNMVACRITD</original>
    <variation>GNTEAKANTHT</variation>
    <location>
        <begin position="893"/>
        <end position="903"/>
    </location>
</feature>
<feature type="splice variant" id="VSP_028404" description="In isoform 5." evidence="9">
    <original>FNMVACRIT</original>
    <variation>IIRLQSSTW</variation>
    <location>
        <begin position="894"/>
        <end position="902"/>
    </location>
</feature>
<feature type="splice variant" id="VSP_028405" description="In isoform 5." evidence="9">
    <location>
        <begin position="903"/>
        <end position="1531"/>
    </location>
</feature>
<feature type="splice variant" id="VSP_028406" description="In isoform 4." evidence="7">
    <location>
        <begin position="904"/>
        <end position="1531"/>
    </location>
</feature>
<feature type="splice variant" id="VSP_028407" description="In isoform 2." evidence="8">
    <original>NNTEHYRDYESVFIVPGHPVIIKIVQTNPNIKSNRHSHCH</original>
    <variation>KYKQTRISSLTAILIAI</variation>
    <location>
        <begin position="931"/>
        <end position="970"/>
    </location>
</feature>
<feature type="sequence conflict" description="In Ref. 1; CAC39163." evidence="9" ref="1">
    <original>A</original>
    <variation>P</variation>
    <location>
        <position position="731"/>
    </location>
</feature>
<feature type="sequence conflict" description="In Ref. 4; AAQ23565." evidence="9" ref="4">
    <original>T</original>
    <variation>M</variation>
    <location>
        <position position="796"/>
    </location>
</feature>
<feature type="sequence conflict" description="In Ref. 4; AAQ23565." evidence="9" ref="4">
    <original>A</original>
    <variation>T</variation>
    <location>
        <position position="904"/>
    </location>
</feature>
<feature type="sequence conflict" description="In Ref. 4; AAQ23565." evidence="9" ref="4">
    <original>D</original>
    <variation>G</variation>
    <location>
        <position position="1502"/>
    </location>
</feature>
<gene>
    <name type="primary">tutl</name>
    <name type="ORF">CG15427</name>
</gene>
<comment type="function">
    <text evidence="5">Essential protein that plays a role in the establishment of coordinated motor control (PubMed:11312296). In the developing eye, involved in axonal targeting of the R7 photoreceptor (PubMed:24174674).</text>
</comment>
<comment type="subunit">
    <text evidence="6">Interacts with bdl.</text>
</comment>
<comment type="interaction">
    <interactant intactId="EBI-3487134">
        <id>Q967D7</id>
    </interactant>
    <interactant intactId="EBI-85823">
        <id>Q9VQW7</id>
        <label>ed</label>
    </interactant>
    <organismsDiffer>false</organismsDiffer>
    <experiments>2</experiments>
</comment>
<comment type="subcellular location">
    <subcellularLocation>
        <location evidence="9">Membrane</location>
        <topology evidence="9">Single-pass membrane protein</topology>
    </subcellularLocation>
</comment>
<comment type="alternative products">
    <event type="alternative splicing"/>
    <isoform>
        <id>Q967D7-1</id>
        <name>1</name>
        <name>4</name>
        <sequence type="displayed"/>
    </isoform>
    <isoform>
        <id>Q967D7-2</id>
        <name>2</name>
        <name>D</name>
        <sequence type="described" ref="VSP_028407"/>
    </isoform>
    <isoform>
        <id>Q967D7-3</id>
        <name>3</name>
        <name>A</name>
        <sequence type="described" ref="VSP_028401 VSP_028402"/>
    </isoform>
    <isoform>
        <id>Q967D7-4</id>
        <name>4</name>
        <name>C</name>
        <sequence type="described" ref="VSP_028403 VSP_028406"/>
    </isoform>
    <isoform>
        <id>Q967D7-5</id>
        <name>5</name>
        <name>E</name>
        <sequence type="described" ref="VSP_028404 VSP_028405"/>
    </isoform>
</comment>
<comment type="tissue specificity">
    <text evidence="5">Exclusively expressed in the central nervous system.</text>
</comment>
<comment type="developmental stage">
    <text evidence="5">Expressed throughout the central nervous system from segregation of neuronal precursors through the end of development. Also detected in cephalic sensory structures.</text>
</comment>
<comment type="disruption phenotype">
    <text evidence="5 6">Adult mutant flies are unable to fly and roll over when inverted, explaining the name 'turtle' (PubMed:11312296). In the eye, axonal tiling of the R7 photoreceptor is defective in approximately 22% of axons (PubMed:24174674). Double knockouts of tutl and bdl rescue the R7 axonal tiling defect (PubMed:24174674).</text>
</comment>
<comment type="similarity">
    <text evidence="9">Belongs to the immunoglobulin superfamily. Turtle family.</text>
</comment>
<comment type="sequence caution" evidence="9">
    <conflict type="miscellaneous discrepancy">
        <sequence resource="EMBL-CDS" id="CAC39162"/>
    </conflict>
    <text>Contaminating sequence. Potential poly-A sequence.</text>
</comment>
<protein>
    <recommendedName>
        <fullName>Protein turtle</fullName>
    </recommendedName>
</protein>
<accession>Q967D7</accession>
<accession>Q6NR34</accession>
<accession>Q8IQ17</accession>
<accession>Q967D8</accession>
<accession>Q967D9</accession>
<accession>Q967E0</accession>
<accession>Q9VQY0</accession>
<accession>Q9VQY1</accession>
<accession>Q9VQY2</accession>